<protein>
    <recommendedName>
        <fullName evidence="1">Deoxyguanosinetriphosphate triphosphohydrolase-like protein</fullName>
    </recommendedName>
</protein>
<sequence length="365" mass="42318">MRPHERFHDFLDDFRNPYSRDRDRIIHCSSFRRLEYKTQVFLNSSGDYFRTRLTHSIEVSQIARSIASHLGLNETLAEAIALSHDLGHTPFGHAGGDELDRLLKKHGFEAGFDHNFQSFRVVSKLEKRYPNFEGLNLTFATLEGILKHSYPYQKSFLDAAMNEIFALDYHPSLEAIVVDHADEIAYVSHDIDDGIKYGLIRLEDLEESELVGEMIDKAEQEGVKRSEKVFRYRFVSNLINHLVYGFLEGSQEARLHQGEVRSAMIPSGERLPLGFSPEMGRKLKKLKKLLFTKLYRHEQVNRKMFFGRGCIRALFEDFMNEKNLLPKELQERINQGGKAHRVVADYIASMSDRYAMNLYKELHIG</sequence>
<dbReference type="EMBL" id="BX571657">
    <property type="protein sequence ID" value="CAE09450.1"/>
    <property type="molecule type" value="Genomic_DNA"/>
</dbReference>
<dbReference type="RefSeq" id="WP_011138251.1">
    <property type="nucleotide sequence ID" value="NC_005090.1"/>
</dbReference>
<dbReference type="SMR" id="Q7MAE7"/>
<dbReference type="STRING" id="273121.WS0299"/>
<dbReference type="KEGG" id="wsu:WS0299"/>
<dbReference type="eggNOG" id="COG0232">
    <property type="taxonomic scope" value="Bacteria"/>
</dbReference>
<dbReference type="HOGENOM" id="CLU_028163_1_0_7"/>
<dbReference type="Proteomes" id="UP000000422">
    <property type="component" value="Chromosome"/>
</dbReference>
<dbReference type="GO" id="GO:0016793">
    <property type="term" value="F:triphosphoric monoester hydrolase activity"/>
    <property type="evidence" value="ECO:0007669"/>
    <property type="project" value="InterPro"/>
</dbReference>
<dbReference type="CDD" id="cd00077">
    <property type="entry name" value="HDc"/>
    <property type="match status" value="1"/>
</dbReference>
<dbReference type="Gene3D" id="1.10.3210.10">
    <property type="entry name" value="Hypothetical protein af1432"/>
    <property type="match status" value="1"/>
</dbReference>
<dbReference type="HAMAP" id="MF_01212">
    <property type="entry name" value="dGTPase_type2"/>
    <property type="match status" value="1"/>
</dbReference>
<dbReference type="InterPro" id="IPR006261">
    <property type="entry name" value="dGTPase"/>
</dbReference>
<dbReference type="InterPro" id="IPR051094">
    <property type="entry name" value="Diverse_Catalytic_Enzymes"/>
</dbReference>
<dbReference type="InterPro" id="IPR023023">
    <property type="entry name" value="dNTPase_2"/>
</dbReference>
<dbReference type="InterPro" id="IPR003607">
    <property type="entry name" value="HD/PDEase_dom"/>
</dbReference>
<dbReference type="InterPro" id="IPR006674">
    <property type="entry name" value="HD_domain"/>
</dbReference>
<dbReference type="InterPro" id="IPR026875">
    <property type="entry name" value="PHydrolase_assoc_dom"/>
</dbReference>
<dbReference type="NCBIfam" id="TIGR01353">
    <property type="entry name" value="dGTP_triPase"/>
    <property type="match status" value="1"/>
</dbReference>
<dbReference type="NCBIfam" id="NF002326">
    <property type="entry name" value="PRK01286.1-1"/>
    <property type="match status" value="1"/>
</dbReference>
<dbReference type="PANTHER" id="PTHR35795:SF1">
    <property type="entry name" value="BIS(5'-NUCLEOSYL)-TETRAPHOSPHATASE, SYMMETRICAL"/>
    <property type="match status" value="1"/>
</dbReference>
<dbReference type="PANTHER" id="PTHR35795">
    <property type="entry name" value="SLR1885 PROTEIN"/>
    <property type="match status" value="1"/>
</dbReference>
<dbReference type="Pfam" id="PF01966">
    <property type="entry name" value="HD"/>
    <property type="match status" value="1"/>
</dbReference>
<dbReference type="Pfam" id="PF13286">
    <property type="entry name" value="HD_assoc"/>
    <property type="match status" value="1"/>
</dbReference>
<dbReference type="SMART" id="SM00471">
    <property type="entry name" value="HDc"/>
    <property type="match status" value="1"/>
</dbReference>
<dbReference type="SUPFAM" id="SSF109604">
    <property type="entry name" value="HD-domain/PDEase-like"/>
    <property type="match status" value="1"/>
</dbReference>
<dbReference type="PROSITE" id="PS51831">
    <property type="entry name" value="HD"/>
    <property type="match status" value="1"/>
</dbReference>
<accession>Q7MAE7</accession>
<feature type="chain" id="PRO_0000205328" description="Deoxyguanosinetriphosphate triphosphohydrolase-like protein">
    <location>
        <begin position="1"/>
        <end position="365"/>
    </location>
</feature>
<feature type="domain" description="HD" evidence="2">
    <location>
        <begin position="52"/>
        <end position="187"/>
    </location>
</feature>
<evidence type="ECO:0000255" key="1">
    <source>
        <dbReference type="HAMAP-Rule" id="MF_01212"/>
    </source>
</evidence>
<evidence type="ECO:0000255" key="2">
    <source>
        <dbReference type="PROSITE-ProRule" id="PRU01175"/>
    </source>
</evidence>
<organism>
    <name type="scientific">Wolinella succinogenes (strain ATCC 29543 / DSM 1740 / CCUG 13145 / JCM 31913 / LMG 7466 / NCTC 11488 / FDC 602W)</name>
    <name type="common">Vibrio succinogenes</name>
    <dbReference type="NCBI Taxonomy" id="273121"/>
    <lineage>
        <taxon>Bacteria</taxon>
        <taxon>Pseudomonadati</taxon>
        <taxon>Campylobacterota</taxon>
        <taxon>Epsilonproteobacteria</taxon>
        <taxon>Campylobacterales</taxon>
        <taxon>Helicobacteraceae</taxon>
        <taxon>Wolinella</taxon>
    </lineage>
</organism>
<reference key="1">
    <citation type="journal article" date="2003" name="Proc. Natl. Acad. Sci. U.S.A.">
        <title>Complete genome sequence and analysis of Wolinella succinogenes.</title>
        <authorList>
            <person name="Baar C."/>
            <person name="Eppinger M."/>
            <person name="Raddatz G."/>
            <person name="Simon J."/>
            <person name="Lanz C."/>
            <person name="Klimmek O."/>
            <person name="Nandakumar R."/>
            <person name="Gross R."/>
            <person name="Rosinus A."/>
            <person name="Keller H."/>
            <person name="Jagtap P."/>
            <person name="Linke B."/>
            <person name="Meyer F."/>
            <person name="Lederer H."/>
            <person name="Schuster S.C."/>
        </authorList>
    </citation>
    <scope>NUCLEOTIDE SEQUENCE [LARGE SCALE GENOMIC DNA]</scope>
    <source>
        <strain>ATCC 29543 / DSM 1740 / CCUG 13145 / JCM 31913 / LMG 7466 / NCTC 11488 / FDC 602W</strain>
    </source>
</reference>
<proteinExistence type="inferred from homology"/>
<comment type="similarity">
    <text evidence="1">Belongs to the dGTPase family. Type 2 subfamily.</text>
</comment>
<name>DGTL1_WOLSU</name>
<gene>
    <name type="ordered locus">WS0299</name>
</gene>
<keyword id="KW-0378">Hydrolase</keyword>
<keyword id="KW-1185">Reference proteome</keyword>